<sequence>MAKRKIVKKKVVRKSIAKGIVYISATFNNTMVTVTDEMGNAIAWSSAGGLGFKGSKKSTPYAAQQAVEDALNKAKEHGIKEVGIKVQGPGSGRETAVKSVGAVEGIKVTFLKDITPLAHNGCRPPKRRRV</sequence>
<proteinExistence type="inferred from homology"/>
<reference key="1">
    <citation type="submission" date="2007-07" db="EMBL/GenBank/DDBJ databases">
        <title>Genome sequence of Campylobacter curvus 525.92 isolated from human feces.</title>
        <authorList>
            <person name="Fouts D.E."/>
            <person name="Mongodin E.F."/>
            <person name="Puiu D."/>
            <person name="Sebastian Y."/>
            <person name="Miller W.G."/>
            <person name="Mandrell R.E."/>
            <person name="Lastovica A.J."/>
            <person name="Nelson K.E."/>
        </authorList>
    </citation>
    <scope>NUCLEOTIDE SEQUENCE [LARGE SCALE GENOMIC DNA]</scope>
    <source>
        <strain>525.92</strain>
    </source>
</reference>
<keyword id="KW-1185">Reference proteome</keyword>
<keyword id="KW-0687">Ribonucleoprotein</keyword>
<keyword id="KW-0689">Ribosomal protein</keyword>
<keyword id="KW-0694">RNA-binding</keyword>
<keyword id="KW-0699">rRNA-binding</keyword>
<feature type="chain" id="PRO_1000051830" description="Small ribosomal subunit protein uS11">
    <location>
        <begin position="1"/>
        <end position="130"/>
    </location>
</feature>
<evidence type="ECO:0000255" key="1">
    <source>
        <dbReference type="HAMAP-Rule" id="MF_01310"/>
    </source>
</evidence>
<evidence type="ECO:0000305" key="2"/>
<protein>
    <recommendedName>
        <fullName evidence="1">Small ribosomal subunit protein uS11</fullName>
    </recommendedName>
    <alternativeName>
        <fullName evidence="2">30S ribosomal protein S11</fullName>
    </alternativeName>
</protein>
<dbReference type="EMBL" id="CP000767">
    <property type="protein sequence ID" value="EAT99595.1"/>
    <property type="molecule type" value="Genomic_DNA"/>
</dbReference>
<dbReference type="RefSeq" id="WP_009649639.1">
    <property type="nucleotide sequence ID" value="NC_009715.2"/>
</dbReference>
<dbReference type="SMR" id="A7H0Z1"/>
<dbReference type="STRING" id="360105.CCV52592_1010"/>
<dbReference type="GeneID" id="61003074"/>
<dbReference type="KEGG" id="ccv:CCV52592_1010"/>
<dbReference type="HOGENOM" id="CLU_072439_5_0_7"/>
<dbReference type="OrthoDB" id="9806415at2"/>
<dbReference type="Proteomes" id="UP000006380">
    <property type="component" value="Chromosome"/>
</dbReference>
<dbReference type="GO" id="GO:1990904">
    <property type="term" value="C:ribonucleoprotein complex"/>
    <property type="evidence" value="ECO:0007669"/>
    <property type="project" value="UniProtKB-KW"/>
</dbReference>
<dbReference type="GO" id="GO:0005840">
    <property type="term" value="C:ribosome"/>
    <property type="evidence" value="ECO:0007669"/>
    <property type="project" value="UniProtKB-KW"/>
</dbReference>
<dbReference type="GO" id="GO:0019843">
    <property type="term" value="F:rRNA binding"/>
    <property type="evidence" value="ECO:0007669"/>
    <property type="project" value="UniProtKB-UniRule"/>
</dbReference>
<dbReference type="GO" id="GO:0003735">
    <property type="term" value="F:structural constituent of ribosome"/>
    <property type="evidence" value="ECO:0007669"/>
    <property type="project" value="InterPro"/>
</dbReference>
<dbReference type="GO" id="GO:0006412">
    <property type="term" value="P:translation"/>
    <property type="evidence" value="ECO:0007669"/>
    <property type="project" value="UniProtKB-UniRule"/>
</dbReference>
<dbReference type="FunFam" id="3.30.420.80:FF:000001">
    <property type="entry name" value="30S ribosomal protein S11"/>
    <property type="match status" value="1"/>
</dbReference>
<dbReference type="Gene3D" id="3.30.420.80">
    <property type="entry name" value="Ribosomal protein S11"/>
    <property type="match status" value="1"/>
</dbReference>
<dbReference type="HAMAP" id="MF_01310">
    <property type="entry name" value="Ribosomal_uS11"/>
    <property type="match status" value="1"/>
</dbReference>
<dbReference type="InterPro" id="IPR001971">
    <property type="entry name" value="Ribosomal_uS11"/>
</dbReference>
<dbReference type="InterPro" id="IPR019981">
    <property type="entry name" value="Ribosomal_uS11_bac-type"/>
</dbReference>
<dbReference type="InterPro" id="IPR018102">
    <property type="entry name" value="Ribosomal_uS11_CS"/>
</dbReference>
<dbReference type="InterPro" id="IPR036967">
    <property type="entry name" value="Ribosomal_uS11_sf"/>
</dbReference>
<dbReference type="NCBIfam" id="NF003698">
    <property type="entry name" value="PRK05309.1"/>
    <property type="match status" value="1"/>
</dbReference>
<dbReference type="NCBIfam" id="TIGR03632">
    <property type="entry name" value="uS11_bact"/>
    <property type="match status" value="1"/>
</dbReference>
<dbReference type="PANTHER" id="PTHR11759">
    <property type="entry name" value="40S RIBOSOMAL PROTEIN S14/30S RIBOSOMAL PROTEIN S11"/>
    <property type="match status" value="1"/>
</dbReference>
<dbReference type="Pfam" id="PF00411">
    <property type="entry name" value="Ribosomal_S11"/>
    <property type="match status" value="1"/>
</dbReference>
<dbReference type="PIRSF" id="PIRSF002131">
    <property type="entry name" value="Ribosomal_S11"/>
    <property type="match status" value="1"/>
</dbReference>
<dbReference type="SUPFAM" id="SSF53137">
    <property type="entry name" value="Translational machinery components"/>
    <property type="match status" value="1"/>
</dbReference>
<dbReference type="PROSITE" id="PS00054">
    <property type="entry name" value="RIBOSOMAL_S11"/>
    <property type="match status" value="1"/>
</dbReference>
<accession>A7H0Z1</accession>
<gene>
    <name evidence="1" type="primary">rpsK</name>
    <name type="ordered locus">Ccur92_18290</name>
    <name type="ORF">CCV52592_1010</name>
</gene>
<organism>
    <name type="scientific">Campylobacter curvus (strain 525.92)</name>
    <dbReference type="NCBI Taxonomy" id="360105"/>
    <lineage>
        <taxon>Bacteria</taxon>
        <taxon>Pseudomonadati</taxon>
        <taxon>Campylobacterota</taxon>
        <taxon>Epsilonproteobacteria</taxon>
        <taxon>Campylobacterales</taxon>
        <taxon>Campylobacteraceae</taxon>
        <taxon>Campylobacter</taxon>
    </lineage>
</organism>
<name>RS11_CAMC5</name>
<comment type="function">
    <text evidence="1">Located on the platform of the 30S subunit, it bridges several disparate RNA helices of the 16S rRNA. Forms part of the Shine-Dalgarno cleft in the 70S ribosome.</text>
</comment>
<comment type="subunit">
    <text evidence="1">Part of the 30S ribosomal subunit. Interacts with proteins S7 and S18. Binds to IF-3.</text>
</comment>
<comment type="similarity">
    <text evidence="1">Belongs to the universal ribosomal protein uS11 family.</text>
</comment>